<dbReference type="EC" id="3.1.-.-" evidence="1"/>
<dbReference type="EC" id="3.6.4.-" evidence="1"/>
<dbReference type="EMBL" id="CP000560">
    <property type="protein sequence ID" value="ABS74923.1"/>
    <property type="molecule type" value="Genomic_DNA"/>
</dbReference>
<dbReference type="RefSeq" id="WP_012118134.1">
    <property type="nucleotide sequence ID" value="NC_009725.2"/>
</dbReference>
<dbReference type="SMR" id="A7Z7E7"/>
<dbReference type="GeneID" id="93081707"/>
<dbReference type="KEGG" id="bay:RBAM_025650"/>
<dbReference type="HOGENOM" id="CLU_011252_2_1_9"/>
<dbReference type="Proteomes" id="UP000001120">
    <property type="component" value="Chromosome"/>
</dbReference>
<dbReference type="GO" id="GO:0005524">
    <property type="term" value="F:ATP binding"/>
    <property type="evidence" value="ECO:0007669"/>
    <property type="project" value="UniProtKB-UniRule"/>
</dbReference>
<dbReference type="GO" id="GO:0016887">
    <property type="term" value="F:ATP hydrolysis activity"/>
    <property type="evidence" value="ECO:0007669"/>
    <property type="project" value="InterPro"/>
</dbReference>
<dbReference type="GO" id="GO:0140664">
    <property type="term" value="F:ATP-dependent DNA damage sensor activity"/>
    <property type="evidence" value="ECO:0007669"/>
    <property type="project" value="InterPro"/>
</dbReference>
<dbReference type="GO" id="GO:0004519">
    <property type="term" value="F:endonuclease activity"/>
    <property type="evidence" value="ECO:0007669"/>
    <property type="project" value="UniProtKB-UniRule"/>
</dbReference>
<dbReference type="GO" id="GO:0030983">
    <property type="term" value="F:mismatched DNA binding"/>
    <property type="evidence" value="ECO:0007669"/>
    <property type="project" value="InterPro"/>
</dbReference>
<dbReference type="GO" id="GO:0043023">
    <property type="term" value="F:ribosomal large subunit binding"/>
    <property type="evidence" value="ECO:0007669"/>
    <property type="project" value="UniProtKB-UniRule"/>
</dbReference>
<dbReference type="GO" id="GO:0019843">
    <property type="term" value="F:rRNA binding"/>
    <property type="evidence" value="ECO:0007669"/>
    <property type="project" value="UniProtKB-UniRule"/>
</dbReference>
<dbReference type="GO" id="GO:0006298">
    <property type="term" value="P:mismatch repair"/>
    <property type="evidence" value="ECO:0007669"/>
    <property type="project" value="InterPro"/>
</dbReference>
<dbReference type="GO" id="GO:0045910">
    <property type="term" value="P:negative regulation of DNA recombination"/>
    <property type="evidence" value="ECO:0007669"/>
    <property type="project" value="InterPro"/>
</dbReference>
<dbReference type="GO" id="GO:0072344">
    <property type="term" value="P:rescue of stalled ribosome"/>
    <property type="evidence" value="ECO:0007669"/>
    <property type="project" value="UniProtKB-UniRule"/>
</dbReference>
<dbReference type="CDD" id="cd03280">
    <property type="entry name" value="ABC_MutS2"/>
    <property type="match status" value="1"/>
</dbReference>
<dbReference type="FunFam" id="3.40.50.300:FF:000830">
    <property type="entry name" value="Endonuclease MutS2"/>
    <property type="match status" value="1"/>
</dbReference>
<dbReference type="Gene3D" id="3.30.1370.110">
    <property type="match status" value="1"/>
</dbReference>
<dbReference type="Gene3D" id="3.40.50.300">
    <property type="entry name" value="P-loop containing nucleotide triphosphate hydrolases"/>
    <property type="match status" value="1"/>
</dbReference>
<dbReference type="HAMAP" id="MF_00092">
    <property type="entry name" value="MutS2"/>
    <property type="match status" value="1"/>
</dbReference>
<dbReference type="InterPro" id="IPR000432">
    <property type="entry name" value="DNA_mismatch_repair_MutS_C"/>
</dbReference>
<dbReference type="InterPro" id="IPR007696">
    <property type="entry name" value="DNA_mismatch_repair_MutS_core"/>
</dbReference>
<dbReference type="InterPro" id="IPR036187">
    <property type="entry name" value="DNA_mismatch_repair_MutS_sf"/>
</dbReference>
<dbReference type="InterPro" id="IPR046893">
    <property type="entry name" value="MSSS"/>
</dbReference>
<dbReference type="InterPro" id="IPR045076">
    <property type="entry name" value="MutS"/>
</dbReference>
<dbReference type="InterPro" id="IPR005747">
    <property type="entry name" value="MutS2"/>
</dbReference>
<dbReference type="InterPro" id="IPR027417">
    <property type="entry name" value="P-loop_NTPase"/>
</dbReference>
<dbReference type="InterPro" id="IPR002625">
    <property type="entry name" value="Smr_dom"/>
</dbReference>
<dbReference type="InterPro" id="IPR036063">
    <property type="entry name" value="Smr_dom_sf"/>
</dbReference>
<dbReference type="NCBIfam" id="TIGR01069">
    <property type="entry name" value="mutS2"/>
    <property type="match status" value="1"/>
</dbReference>
<dbReference type="PANTHER" id="PTHR48466:SF2">
    <property type="entry name" value="OS10G0509000 PROTEIN"/>
    <property type="match status" value="1"/>
</dbReference>
<dbReference type="PANTHER" id="PTHR48466">
    <property type="entry name" value="OS10G0509000 PROTEIN-RELATED"/>
    <property type="match status" value="1"/>
</dbReference>
<dbReference type="Pfam" id="PF20297">
    <property type="entry name" value="MSSS"/>
    <property type="match status" value="1"/>
</dbReference>
<dbReference type="Pfam" id="PF00488">
    <property type="entry name" value="MutS_V"/>
    <property type="match status" value="1"/>
</dbReference>
<dbReference type="Pfam" id="PF01713">
    <property type="entry name" value="Smr"/>
    <property type="match status" value="1"/>
</dbReference>
<dbReference type="PIRSF" id="PIRSF005814">
    <property type="entry name" value="MutS_YshD"/>
    <property type="match status" value="1"/>
</dbReference>
<dbReference type="SMART" id="SM00534">
    <property type="entry name" value="MUTSac"/>
    <property type="match status" value="1"/>
</dbReference>
<dbReference type="SMART" id="SM00533">
    <property type="entry name" value="MUTSd"/>
    <property type="match status" value="1"/>
</dbReference>
<dbReference type="SMART" id="SM00463">
    <property type="entry name" value="SMR"/>
    <property type="match status" value="1"/>
</dbReference>
<dbReference type="SUPFAM" id="SSF48334">
    <property type="entry name" value="DNA repair protein MutS, domain III"/>
    <property type="match status" value="1"/>
</dbReference>
<dbReference type="SUPFAM" id="SSF52540">
    <property type="entry name" value="P-loop containing nucleoside triphosphate hydrolases"/>
    <property type="match status" value="1"/>
</dbReference>
<dbReference type="SUPFAM" id="SSF160443">
    <property type="entry name" value="SMR domain-like"/>
    <property type="match status" value="1"/>
</dbReference>
<dbReference type="PROSITE" id="PS00486">
    <property type="entry name" value="DNA_MISMATCH_REPAIR_2"/>
    <property type="match status" value="1"/>
</dbReference>
<dbReference type="PROSITE" id="PS50828">
    <property type="entry name" value="SMR"/>
    <property type="match status" value="1"/>
</dbReference>
<comment type="function">
    <text evidence="1">Endonuclease that is involved in the suppression of homologous recombination and thus may have a key role in the control of bacterial genetic diversity.</text>
</comment>
<comment type="function">
    <text evidence="1">Acts as a ribosome collision sensor, splitting the ribosome into its 2 subunits. Detects stalled/collided 70S ribosomes which it binds and splits by an ATP-hydrolysis driven conformational change. Acts upstream of the ribosome quality control system (RQC), a ribosome-associated complex that mediates the extraction of incompletely synthesized nascent chains from stalled ribosomes and their subsequent degradation. Probably generates substrates for RQC.</text>
</comment>
<comment type="subunit">
    <text evidence="1">Homodimer. Binds to stalled ribosomes, contacting rRNA.</text>
</comment>
<comment type="similarity">
    <text evidence="1">Belongs to the DNA mismatch repair MutS family. MutS2 subfamily.</text>
</comment>
<keyword id="KW-0067">ATP-binding</keyword>
<keyword id="KW-0238">DNA-binding</keyword>
<keyword id="KW-0255">Endonuclease</keyword>
<keyword id="KW-0378">Hydrolase</keyword>
<keyword id="KW-0540">Nuclease</keyword>
<keyword id="KW-0547">Nucleotide-binding</keyword>
<keyword id="KW-0694">RNA-binding</keyword>
<keyword id="KW-0699">rRNA-binding</keyword>
<gene>
    <name evidence="1" type="primary">mutS2</name>
    <name evidence="1" type="synonym">rqcU</name>
    <name type="ordered locus">RBAM_025650</name>
</gene>
<evidence type="ECO:0000255" key="1">
    <source>
        <dbReference type="HAMAP-Rule" id="MF_00092"/>
    </source>
</evidence>
<protein>
    <recommendedName>
        <fullName evidence="1">Endonuclease MutS2</fullName>
        <ecNumber evidence="1">3.1.-.-</ecNumber>
    </recommendedName>
    <alternativeName>
        <fullName evidence="1">Ribosome-associated protein quality control-upstream factor</fullName>
        <shortName evidence="1">RQC-upstream factor</shortName>
        <shortName evidence="1">RqcU</shortName>
        <ecNumber evidence="1">3.6.4.-</ecNumber>
    </alternativeName>
</protein>
<accession>A7Z7E7</accession>
<name>MUTS2_BACVZ</name>
<reference key="1">
    <citation type="journal article" date="2007" name="Nat. Biotechnol.">
        <title>Comparative analysis of the complete genome sequence of the plant growth-promoting bacterium Bacillus amyloliquefaciens FZB42.</title>
        <authorList>
            <person name="Chen X.H."/>
            <person name="Koumoutsi A."/>
            <person name="Scholz R."/>
            <person name="Eisenreich A."/>
            <person name="Schneider K."/>
            <person name="Heinemeyer I."/>
            <person name="Morgenstern B."/>
            <person name="Voss B."/>
            <person name="Hess W.R."/>
            <person name="Reva O."/>
            <person name="Junge H."/>
            <person name="Voigt B."/>
            <person name="Jungblut P.R."/>
            <person name="Vater J."/>
            <person name="Suessmuth R."/>
            <person name="Liesegang H."/>
            <person name="Strittmatter A."/>
            <person name="Gottschalk G."/>
            <person name="Borriss R."/>
        </authorList>
    </citation>
    <scope>NUCLEOTIDE SEQUENCE [LARGE SCALE GENOMIC DNA]</scope>
    <source>
        <strain>DSM 23117 / BGSC 10A6 / LMG 26770 / FZB42</strain>
    </source>
</reference>
<proteinExistence type="inferred from homology"/>
<organism>
    <name type="scientific">Bacillus velezensis (strain DSM 23117 / BGSC 10A6 / LMG 26770 / FZB42)</name>
    <name type="common">Bacillus amyloliquefaciens subsp. plantarum</name>
    <dbReference type="NCBI Taxonomy" id="326423"/>
    <lineage>
        <taxon>Bacteria</taxon>
        <taxon>Bacillati</taxon>
        <taxon>Bacillota</taxon>
        <taxon>Bacilli</taxon>
        <taxon>Bacillales</taxon>
        <taxon>Bacillaceae</taxon>
        <taxon>Bacillus</taxon>
        <taxon>Bacillus amyloliquefaciens group</taxon>
    </lineage>
</organism>
<sequence>MQQKVLSSLEFHKVKEQITAHAASSLGREKLLQLKPLTDLSDIQKQLDEVEEASAVMRLRGHAPFGGLTDIRSALRRAEIGSVLTPAEFTELSGLLYAVKQMKHFISQMTEDGVGIPLIQAHAEELITLGDLEREINSCIDDHGEVLDHASPALRGIRTQLRTLESRVRDRLESMLRSSSASKMLSDTIVTIRNDRFVIPVKQEYRSSYGGIVHDTSSSGATLFIEPQAIVDMNNSLQQAKVKEKQEIERILRMLTEHTAEHTQEIAQDVEVLQTLDFIFAKARYAKAMKATKPLMNGDGFIRLKKARHPLLPQDQVVANDIELGGDYSTIVITGPNTGGKTVTLKTLGLLTIMAQAGLHIPADEGSEAAVFDNVFADIGDEQSIEQSLSTFSSHMVNIVNILKDVSENSLVLFDELGAGTDPQEGAALAMSILDEVHRTNARVLATTHYPELKAYGYNRQGVMNASVEFDIETLSPTYKLLIGVPGRSNAFEISRRLGLPEHIIGQAKSEMTAEHNEVDLMIASLEKSKKRADEELSETESIRKEAEKLHKDLQQQIIELNAQKDKMMEEAEQKAAEKLEAAANEAEQIIRELRSIKQEHRSFKEHELIDAKKRLGDAMPAFEKSKQPERKTEKKRELKPGDEVKVLTFGQKGALLEKTGEKEWNVQIGILKMKVKEKDLEFLKSAPEPKKEKAITAVKGKDYHVSLELDLRGERYENALSRVEKYLDDAVLAGHPRVSIIHGKGTGALRKGVQDLLKNHRSVKSSRFGEAGEGGSGVTIVELK</sequence>
<feature type="chain" id="PRO_1000075465" description="Endonuclease MutS2">
    <location>
        <begin position="1"/>
        <end position="785"/>
    </location>
</feature>
<feature type="domain" description="Smr" evidence="1">
    <location>
        <begin position="710"/>
        <end position="785"/>
    </location>
</feature>
<feature type="binding site" evidence="1">
    <location>
        <begin position="335"/>
        <end position="342"/>
    </location>
    <ligand>
        <name>ATP</name>
        <dbReference type="ChEBI" id="CHEBI:30616"/>
    </ligand>
</feature>